<dbReference type="EMBL" id="AF214975">
    <property type="protein sequence ID" value="AAG60403.1"/>
    <property type="molecule type" value="mRNA"/>
</dbReference>
<dbReference type="TCDB" id="8.B.4.1.2">
    <property type="family name" value="the conotoxin t (conotoxin t) family"/>
</dbReference>
<dbReference type="ConoServer" id="662">
    <property type="toxin name" value="Pn-0111 precursor"/>
</dbReference>
<dbReference type="GO" id="GO:0005576">
    <property type="term" value="C:extracellular region"/>
    <property type="evidence" value="ECO:0007669"/>
    <property type="project" value="UniProtKB-SubCell"/>
</dbReference>
<dbReference type="GO" id="GO:0090729">
    <property type="term" value="F:toxin activity"/>
    <property type="evidence" value="ECO:0007669"/>
    <property type="project" value="UniProtKB-KW"/>
</dbReference>
<dbReference type="InterPro" id="IPR031565">
    <property type="entry name" value="T-conotoxin"/>
</dbReference>
<dbReference type="Pfam" id="PF16981">
    <property type="entry name" value="Chi-conotoxin"/>
    <property type="match status" value="1"/>
</dbReference>
<reference key="1">
    <citation type="journal article" date="2001" name="Mol. Biol. Evol.">
        <title>Mechanisms for evolving hypervariability: the case of conopeptides.</title>
        <authorList>
            <person name="Conticello S.G."/>
            <person name="Gilad Y."/>
            <person name="Avidan N."/>
            <person name="Ben-Asher E."/>
            <person name="Levy Z."/>
            <person name="Fainzilber M."/>
        </authorList>
    </citation>
    <scope>NUCLEOTIDE SEQUENCE [MRNA]</scope>
    <source>
        <tissue>Venom duct</tissue>
    </source>
</reference>
<feature type="signal peptide" evidence="2">
    <location>
        <begin position="1"/>
        <end position="19"/>
    </location>
</feature>
<feature type="propeptide" id="PRO_0000274078" evidence="1">
    <location>
        <begin position="20"/>
        <end position="49"/>
    </location>
</feature>
<feature type="peptide" id="PRO_0000274079" description="Conotoxin PnMRCL-0111">
    <location>
        <begin position="51"/>
        <end position="62"/>
    </location>
</feature>
<feature type="modified residue" description="Tryptophan amide" evidence="1">
    <location>
        <position position="62"/>
    </location>
</feature>
<accession>Q9BPF4</accession>
<comment type="subcellular location">
    <subcellularLocation>
        <location evidence="4">Secreted</location>
    </subcellularLocation>
</comment>
<comment type="tissue specificity">
    <text evidence="4">Expressed by the venom duct.</text>
</comment>
<comment type="domain">
    <text evidence="3">The cysteine framework is V (CC-CC).</text>
</comment>
<comment type="PTM">
    <text evidence="3">Contains 2 disulfide bonds that can be either 'C1-C3, C2-C4' or 'C1-C4, C2-C3', since these disulfide connectivities have been observed for conotoxins with cysteine framework V (for examples, see AC P0DQQ7 and AC P81755).</text>
</comment>
<comment type="similarity">
    <text evidence="3">Belongs to the conotoxin T superfamily.</text>
</comment>
<organism>
    <name type="scientific">Conus pennaceus</name>
    <name type="common">Feathered cone</name>
    <name type="synonym">Conus episcopus</name>
    <dbReference type="NCBI Taxonomy" id="37335"/>
    <lineage>
        <taxon>Eukaryota</taxon>
        <taxon>Metazoa</taxon>
        <taxon>Spiralia</taxon>
        <taxon>Lophotrochozoa</taxon>
        <taxon>Mollusca</taxon>
        <taxon>Gastropoda</taxon>
        <taxon>Caenogastropoda</taxon>
        <taxon>Neogastropoda</taxon>
        <taxon>Conoidea</taxon>
        <taxon>Conidae</taxon>
        <taxon>Conus</taxon>
        <taxon>Darioconus</taxon>
    </lineage>
</organism>
<keyword id="KW-0027">Amidation</keyword>
<keyword id="KW-0165">Cleavage on pair of basic residues</keyword>
<keyword id="KW-1015">Disulfide bond</keyword>
<keyword id="KW-0528">Neurotoxin</keyword>
<keyword id="KW-0964">Secreted</keyword>
<keyword id="KW-0732">Signal</keyword>
<keyword id="KW-0800">Toxin</keyword>
<sequence>MRCLPVFIVLLLLIVSAPGFDARPKTEDDVPLSSFHDDLQRTVRTLLDIRMCCLGTSGCCPWG</sequence>
<protein>
    <recommendedName>
        <fullName evidence="5">Conotoxin PnMRCL-0111</fullName>
    </recommendedName>
</protein>
<proteinExistence type="inferred from homology"/>
<name>CT511_CONPE</name>
<evidence type="ECO:0000250" key="1"/>
<evidence type="ECO:0000255" key="2"/>
<evidence type="ECO:0000305" key="3"/>
<evidence type="ECO:0000305" key="4">
    <source>
    </source>
</evidence>
<evidence type="ECO:0000312" key="5">
    <source>
        <dbReference type="EMBL" id="AAG60403.1"/>
    </source>
</evidence>